<evidence type="ECO:0000255" key="1">
    <source>
        <dbReference type="HAMAP-Rule" id="MF_00262"/>
    </source>
</evidence>
<proteinExistence type="inferred from homology"/>
<name>MINE_FRAP2</name>
<gene>
    <name evidence="1" type="primary">minE</name>
    <name type="ordered locus">Fphi_0496</name>
</gene>
<keyword id="KW-0131">Cell cycle</keyword>
<keyword id="KW-0132">Cell division</keyword>
<protein>
    <recommendedName>
        <fullName evidence="1">Cell division topological specificity factor</fullName>
    </recommendedName>
</protein>
<dbReference type="EMBL" id="CP000937">
    <property type="protein sequence ID" value="ABZ86714.1"/>
    <property type="molecule type" value="Genomic_DNA"/>
</dbReference>
<dbReference type="KEGG" id="fph:Fphi_0496"/>
<dbReference type="eggNOG" id="COG0851">
    <property type="taxonomic scope" value="Bacteria"/>
</dbReference>
<dbReference type="HOGENOM" id="CLU_137929_2_2_6"/>
<dbReference type="GO" id="GO:0051301">
    <property type="term" value="P:cell division"/>
    <property type="evidence" value="ECO:0007669"/>
    <property type="project" value="UniProtKB-KW"/>
</dbReference>
<dbReference type="GO" id="GO:0032955">
    <property type="term" value="P:regulation of division septum assembly"/>
    <property type="evidence" value="ECO:0007669"/>
    <property type="project" value="InterPro"/>
</dbReference>
<dbReference type="Gene3D" id="3.30.1070.10">
    <property type="entry name" value="Cell division topological specificity factor MinE"/>
    <property type="match status" value="1"/>
</dbReference>
<dbReference type="HAMAP" id="MF_00262">
    <property type="entry name" value="MinE"/>
    <property type="match status" value="1"/>
</dbReference>
<dbReference type="InterPro" id="IPR005527">
    <property type="entry name" value="MinE"/>
</dbReference>
<dbReference type="InterPro" id="IPR036707">
    <property type="entry name" value="MinE_sf"/>
</dbReference>
<dbReference type="NCBIfam" id="TIGR01215">
    <property type="entry name" value="minE"/>
    <property type="match status" value="1"/>
</dbReference>
<dbReference type="NCBIfam" id="NF001422">
    <property type="entry name" value="PRK00296.1"/>
    <property type="match status" value="1"/>
</dbReference>
<dbReference type="Pfam" id="PF03776">
    <property type="entry name" value="MinE"/>
    <property type="match status" value="1"/>
</dbReference>
<dbReference type="SUPFAM" id="SSF55229">
    <property type="entry name" value="Cell division protein MinE topological specificity domain"/>
    <property type="match status" value="1"/>
</dbReference>
<reference key="1">
    <citation type="submission" date="2007-12" db="EMBL/GenBank/DDBJ databases">
        <title>Complete sequence of chromosome of Francisella philomiragia subsp. philomiragia ATCC 25017.</title>
        <authorList>
            <consortium name="US DOE Joint Genome Institute"/>
            <person name="Copeland A."/>
            <person name="Lucas S."/>
            <person name="Lapidus A."/>
            <person name="Barry K."/>
            <person name="Detter J.C."/>
            <person name="Glavina del Rio T."/>
            <person name="Hammon N."/>
            <person name="Israni S."/>
            <person name="Dalin E."/>
            <person name="Tice H."/>
            <person name="Pitluck S."/>
            <person name="Chain P."/>
            <person name="Malfatti S."/>
            <person name="Shin M."/>
            <person name="Vergez L."/>
            <person name="Schmutz J."/>
            <person name="Larimer F."/>
            <person name="Land M."/>
            <person name="Hauser L."/>
            <person name="Richardson P."/>
        </authorList>
    </citation>
    <scope>NUCLEOTIDE SEQUENCE [LARGE SCALE GENOMIC DNA]</scope>
    <source>
        <strain>ATCC 25017 / CCUG 19701 / FSC 153 / O#319-036</strain>
    </source>
</reference>
<accession>B0U0G3</accession>
<organism>
    <name type="scientific">Francisella philomiragia subsp. philomiragia (strain ATCC 25017 / CCUG 19701 / FSC 153 / O#319-036)</name>
    <dbReference type="NCBI Taxonomy" id="484022"/>
    <lineage>
        <taxon>Bacteria</taxon>
        <taxon>Pseudomonadati</taxon>
        <taxon>Pseudomonadota</taxon>
        <taxon>Gammaproteobacteria</taxon>
        <taxon>Thiotrichales</taxon>
        <taxon>Francisellaceae</taxon>
        <taxon>Francisella</taxon>
    </lineage>
</organism>
<feature type="chain" id="PRO_1000078637" description="Cell division topological specificity factor">
    <location>
        <begin position="1"/>
        <end position="90"/>
    </location>
</feature>
<sequence>MLAKLFGLGKKQQSASLAKERLQIIVAHQRNELHPRSSKISSHLLAELKDEIIEVVKKYVALSEDNIRDIDIKVEDSSKNSTIEVNIPFN</sequence>
<comment type="function">
    <text evidence="1">Prevents the cell division inhibition by proteins MinC and MinD at internal division sites while permitting inhibition at polar sites. This ensures cell division at the proper site by restricting the formation of a division septum at the midpoint of the long axis of the cell.</text>
</comment>
<comment type="similarity">
    <text evidence="1">Belongs to the MinE family.</text>
</comment>